<proteinExistence type="evidence at transcript level"/>
<accession>Q5AV00</accession>
<accession>A0A1U8QSZ5</accession>
<accession>C8V3Y5</accession>
<comment type="function">
    <text evidence="7 8 9">Fatty acid synthase subunit alpha; part of the gene cluster that mediates the biosynthesis of aspercryptins, linear lipopeptides built from six amino acids including 2 highly unusual and nonproteogenic amino acids, 2-amino-octanoic acid (2aoa) and 2-amino-dodecanol (2adol) (PubMed:23248299, PubMed:26563584, PubMed:27310134). The core structure of aspercryptins is as follows: Ser/Ala-Thr-Ile/Val-2aoa-Asn-2adol (PubMed:27310134). The first step of aspercryptin biosynthesis is the generation of the fatty acid precursors, octanoic and dodecanoic acids, by the FAS subunits atnF and atnM (PubMed:26563584, PubMed:27310134). The fatty acid precursors are likely transformed into the corresponding alpha-amino fatty acids in three steps (PubMed:26563584, PubMed:27310134). First, they are hydroxylated by the cytochrome P450 monooxygenase atnE, then oxidized to the corresponding alpha-keto acids by the NAD(P)-dependent oxidoreductase atnD, and finally converted to the alpha-amino fatty acids by the PLP-dependent aminotransferases atnH or atnJ (PubMed:26563584, PubMed:27310134). the alpha-amino fatty acids, 2-amino-octanoic and 2-amino-dodecanoic acids, are recognized, activated, and covalently tethered to the NRPS atnA by its fourth and sixth adenylation domains (PubMed:27310134). The second module of atnA is the Thr module and contains an epimerase (E) domain responsible for the epimerization of Thr to D-allo-Thr (PubMed:26563584). Additionally, despite atnA having only one epimerase domain, the first amino acid of aspercryptin A1 is D-Ser, suggesting that serine is either loaded directly as D-Ser on the first module or that the epimerase domain in the threonine module epimerizes both L-Ser and L-Thr (PubMed:27310134). After condensation of the hexapeptide of aspercryptin, the C-terminal reductase (TE) domain might be involved in the reductive release and production of the aldehyde hexapeptide (PubMed:26563584). Further reduction would generate aspercryptins (PubMed:26563584, PubMed:27310134). The variety of aspercryptins produced reflects the flexibility of the atnA NRPS, allowing incorporation of alanine instead of serine, valine for isoleucine, and a C10 fatty amino alcohol instead of the C12 version (PubMed:27310134). AtnB seems to be involved in the selectivity for Ile versus Val by the third module (PubMed:26563584). Moreover, type B, C and D aspercryptins have an additional N-terminal cichorine, acetyl and propionyl group respectively (PubMed:27310134).</text>
</comment>
<comment type="catalytic activity">
    <reaction evidence="2">
        <text>acetyl-CoA + n malonyl-CoA + 2n NADPH + 4n H(+) = a long-chain-acyl-CoA + n CoA + n CO2 + 2n NADP(+).</text>
        <dbReference type="EC" id="2.3.1.86"/>
    </reaction>
</comment>
<comment type="catalytic activity">
    <reaction evidence="5">
        <text>a fatty acyl-[ACP] + malonyl-[ACP] + H(+) = a 3-oxoacyl-[ACP] + holo-[ACP] + CO2</text>
        <dbReference type="Rhea" id="RHEA:22836"/>
        <dbReference type="Rhea" id="RHEA-COMP:9623"/>
        <dbReference type="Rhea" id="RHEA-COMP:9685"/>
        <dbReference type="Rhea" id="RHEA-COMP:9916"/>
        <dbReference type="Rhea" id="RHEA-COMP:14125"/>
        <dbReference type="ChEBI" id="CHEBI:15378"/>
        <dbReference type="ChEBI" id="CHEBI:16526"/>
        <dbReference type="ChEBI" id="CHEBI:64479"/>
        <dbReference type="ChEBI" id="CHEBI:78449"/>
        <dbReference type="ChEBI" id="CHEBI:78776"/>
        <dbReference type="ChEBI" id="CHEBI:138651"/>
        <dbReference type="EC" id="2.3.1.41"/>
    </reaction>
</comment>
<comment type="catalytic activity">
    <reaction evidence="2">
        <text>a (3R)-hydroxyacyl-[ACP] + NADP(+) = a 3-oxoacyl-[ACP] + NADPH + H(+)</text>
        <dbReference type="Rhea" id="RHEA:17397"/>
        <dbReference type="Rhea" id="RHEA-COMP:9916"/>
        <dbReference type="Rhea" id="RHEA-COMP:9945"/>
        <dbReference type="ChEBI" id="CHEBI:15378"/>
        <dbReference type="ChEBI" id="CHEBI:57783"/>
        <dbReference type="ChEBI" id="CHEBI:58349"/>
        <dbReference type="ChEBI" id="CHEBI:78776"/>
        <dbReference type="ChEBI" id="CHEBI:78827"/>
        <dbReference type="EC" id="1.1.1.100"/>
    </reaction>
</comment>
<comment type="pathway">
    <text evidence="8">Secondary metabolite biosynthesis.</text>
</comment>
<comment type="subunit">
    <text evidence="1">[Alpha(6)beta(6)] hexamers of two multifunctional subunits (alpha and beta).</text>
</comment>
<comment type="induction">
    <text evidence="9">Expression is positively regulated by the aspercryptin cluser-specific transcription factor atnN (PubMed:27310134).</text>
</comment>
<comment type="PTM">
    <text>4'-phosphopantetheine is transferred from CoA to a specific serine of the acyl carrier domain by the C-terminal PPT domain. This modification is essential for activity because fatty acids are bound in thioester linkage to the sulfhydryl of the prosthetic group.</text>
</comment>
<comment type="disruption phenotype">
    <text evidence="8">Eliminates more than 99.5% of aspercryptin production (PubMed:26563584).</text>
</comment>
<comment type="similarity">
    <text evidence="11">Belongs to the thiolase-like superfamily. Fungal fatty acid synthetase subunit alpha family.</text>
</comment>
<name>ATNF_EMENI</name>
<keyword id="KW-0275">Fatty acid biosynthesis</keyword>
<keyword id="KW-0276">Fatty acid metabolism</keyword>
<keyword id="KW-0444">Lipid biosynthesis</keyword>
<keyword id="KW-0443">Lipid metabolism</keyword>
<keyword id="KW-0511">Multifunctional enzyme</keyword>
<keyword id="KW-0521">NADP</keyword>
<keyword id="KW-0560">Oxidoreductase</keyword>
<keyword id="KW-0596">Phosphopantetheine</keyword>
<keyword id="KW-0597">Phosphoprotein</keyword>
<keyword id="KW-1185">Reference proteome</keyword>
<keyword id="KW-0808">Transferase</keyword>
<reference key="1">
    <citation type="journal article" date="2005" name="Nature">
        <title>Sequencing of Aspergillus nidulans and comparative analysis with A. fumigatus and A. oryzae.</title>
        <authorList>
            <person name="Galagan J.E."/>
            <person name="Calvo S.E."/>
            <person name="Cuomo C."/>
            <person name="Ma L.-J."/>
            <person name="Wortman J.R."/>
            <person name="Batzoglou S."/>
            <person name="Lee S.-I."/>
            <person name="Bastuerkmen M."/>
            <person name="Spevak C.C."/>
            <person name="Clutterbuck J."/>
            <person name="Kapitonov V."/>
            <person name="Jurka J."/>
            <person name="Scazzocchio C."/>
            <person name="Farman M.L."/>
            <person name="Butler J."/>
            <person name="Purcell S."/>
            <person name="Harris S."/>
            <person name="Braus G.H."/>
            <person name="Draht O."/>
            <person name="Busch S."/>
            <person name="D'Enfert C."/>
            <person name="Bouchier C."/>
            <person name="Goldman G.H."/>
            <person name="Bell-Pedersen D."/>
            <person name="Griffiths-Jones S."/>
            <person name="Doonan J.H."/>
            <person name="Yu J."/>
            <person name="Vienken K."/>
            <person name="Pain A."/>
            <person name="Freitag M."/>
            <person name="Selker E.U."/>
            <person name="Archer D.B."/>
            <person name="Penalva M.A."/>
            <person name="Oakley B.R."/>
            <person name="Momany M."/>
            <person name="Tanaka T."/>
            <person name="Kumagai T."/>
            <person name="Asai K."/>
            <person name="Machida M."/>
            <person name="Nierman W.C."/>
            <person name="Denning D.W."/>
            <person name="Caddick M.X."/>
            <person name="Hynes M."/>
            <person name="Paoletti M."/>
            <person name="Fischer R."/>
            <person name="Miller B.L."/>
            <person name="Dyer P.S."/>
            <person name="Sachs M.S."/>
            <person name="Osmani S.A."/>
            <person name="Birren B.W."/>
        </authorList>
    </citation>
    <scope>NUCLEOTIDE SEQUENCE [LARGE SCALE GENOMIC DNA]</scope>
    <source>
        <strain>FGSC A4 / ATCC 38163 / CBS 112.46 / NRRL 194 / M139</strain>
    </source>
</reference>
<reference key="2">
    <citation type="journal article" date="2009" name="Fungal Genet. Biol.">
        <title>The 2008 update of the Aspergillus nidulans genome annotation: a community effort.</title>
        <authorList>
            <person name="Wortman J.R."/>
            <person name="Gilsenan J.M."/>
            <person name="Joardar V."/>
            <person name="Deegan J."/>
            <person name="Clutterbuck J."/>
            <person name="Andersen M.R."/>
            <person name="Archer D."/>
            <person name="Bencina M."/>
            <person name="Braus G."/>
            <person name="Coutinho P."/>
            <person name="von Dohren H."/>
            <person name="Doonan J."/>
            <person name="Driessen A.J."/>
            <person name="Durek P."/>
            <person name="Espeso E."/>
            <person name="Fekete E."/>
            <person name="Flipphi M."/>
            <person name="Estrada C.G."/>
            <person name="Geysens S."/>
            <person name="Goldman G."/>
            <person name="de Groot P.W."/>
            <person name="Hansen K."/>
            <person name="Harris S.D."/>
            <person name="Heinekamp T."/>
            <person name="Helmstaedt K."/>
            <person name="Henrissat B."/>
            <person name="Hofmann G."/>
            <person name="Homan T."/>
            <person name="Horio T."/>
            <person name="Horiuchi H."/>
            <person name="James S."/>
            <person name="Jones M."/>
            <person name="Karaffa L."/>
            <person name="Karanyi Z."/>
            <person name="Kato M."/>
            <person name="Keller N."/>
            <person name="Kelly D.E."/>
            <person name="Kiel J.A."/>
            <person name="Kim J.M."/>
            <person name="van der Klei I.J."/>
            <person name="Klis F.M."/>
            <person name="Kovalchuk A."/>
            <person name="Krasevec N."/>
            <person name="Kubicek C.P."/>
            <person name="Liu B."/>
            <person name="Maccabe A."/>
            <person name="Meyer V."/>
            <person name="Mirabito P."/>
            <person name="Miskei M."/>
            <person name="Mos M."/>
            <person name="Mullins J."/>
            <person name="Nelson D.R."/>
            <person name="Nielsen J."/>
            <person name="Oakley B.R."/>
            <person name="Osmani S.A."/>
            <person name="Pakula T."/>
            <person name="Paszewski A."/>
            <person name="Paulsen I."/>
            <person name="Pilsyk S."/>
            <person name="Pocsi I."/>
            <person name="Punt P.J."/>
            <person name="Ram A.F."/>
            <person name="Ren Q."/>
            <person name="Robellet X."/>
            <person name="Robson G."/>
            <person name="Seiboth B."/>
            <person name="van Solingen P."/>
            <person name="Specht T."/>
            <person name="Sun J."/>
            <person name="Taheri-Talesh N."/>
            <person name="Takeshita N."/>
            <person name="Ussery D."/>
            <person name="vanKuyk P.A."/>
            <person name="Visser H."/>
            <person name="van de Vondervoort P.J."/>
            <person name="de Vries R.P."/>
            <person name="Walton J."/>
            <person name="Xiang X."/>
            <person name="Xiong Y."/>
            <person name="Zeng A.P."/>
            <person name="Brandt B.W."/>
            <person name="Cornell M.J."/>
            <person name="van den Hondel C.A."/>
            <person name="Visser J."/>
            <person name="Oliver S.G."/>
            <person name="Turner G."/>
        </authorList>
    </citation>
    <scope>GENOME REANNOTATION</scope>
    <source>
        <strain>FGSC A4 / ATCC 38163 / CBS 112.46 / NRRL 194 / M139</strain>
    </source>
</reference>
<reference key="3">
    <citation type="journal article" date="2013" name="Proc. Natl. Acad. Sci. U.S.A.">
        <title>Accurate prediction of secondary metabolite gene clusters in filamentous fungi.</title>
        <authorList>
            <person name="Andersen M.R."/>
            <person name="Nielsen J.B."/>
            <person name="Klitgaard A."/>
            <person name="Petersen L.M."/>
            <person name="Zachariasen M."/>
            <person name="Hansen T.J."/>
            <person name="Blicher L.H."/>
            <person name="Gotfredsen C.H."/>
            <person name="Larsen T.O."/>
            <person name="Nielsen K.F."/>
            <person name="Mortensen U.H."/>
        </authorList>
    </citation>
    <scope>IDENTIFICATION OF THE CLUSTER</scope>
</reference>
<reference key="4">
    <citation type="journal article" date="2016" name="ACS Chem. Biol.">
        <title>New aspercryptins, lipopeptide natural products, revealed by HDAC inhibition in Aspergillus nidulans.</title>
        <authorList>
            <person name="Henke M.T."/>
            <person name="Soukup A.A."/>
            <person name="Goering A.W."/>
            <person name="McClure R.A."/>
            <person name="Thomson R.J."/>
            <person name="Keller N.P."/>
            <person name="Kelleher N.L."/>
        </authorList>
    </citation>
    <scope>FUNCTION</scope>
    <scope>INDUCTION</scope>
</reference>
<reference key="5">
    <citation type="journal article" date="2016" name="Angew. Chem. Int. Ed.">
        <title>Development of genetic dereplication strains in Aspergillus nidulans results in the discovery of aspercryptin.</title>
        <authorList>
            <person name="Chiang Y.M."/>
            <person name="Ahuja M."/>
            <person name="Oakley C.E."/>
            <person name="Entwistle R."/>
            <person name="Asokan A."/>
            <person name="Zutz C."/>
            <person name="Wang C.C."/>
            <person name="Oakley B.R."/>
        </authorList>
    </citation>
    <scope>FUNCTION</scope>
    <scope>DISRUPTION PHENOTYPE</scope>
    <scope>PATHWAY</scope>
</reference>
<feature type="chain" id="PRO_0000444129" description="Fatty acid synthase subunit alpha">
    <location>
        <begin position="1"/>
        <end position="1659"/>
    </location>
</feature>
<feature type="domain" description="Carrier" evidence="3">
    <location>
        <begin position="160"/>
        <end position="235"/>
    </location>
</feature>
<feature type="domain" description="Ketosynthase family 3 (KS3)" evidence="4">
    <location>
        <begin position="1030"/>
        <end position="1575"/>
    </location>
</feature>
<feature type="region of interest" description="Disordered" evidence="6">
    <location>
        <begin position="114"/>
        <end position="139"/>
    </location>
</feature>
<feature type="region of interest" description="Ketoreductase (KR) domain" evidence="2">
    <location>
        <begin position="588"/>
        <end position="826"/>
    </location>
</feature>
<feature type="region of interest" description="Disordered" evidence="6">
    <location>
        <begin position="1631"/>
        <end position="1659"/>
    </location>
</feature>
<feature type="active site" description="For beta-ketoacyl synthase activity" evidence="4">
    <location>
        <position position="1217"/>
    </location>
</feature>
<feature type="active site" description="For beta-ketoacyl synthase activity" evidence="4">
    <location>
        <position position="1458"/>
    </location>
</feature>
<feature type="active site" description="For beta-ketoacyl synthase activity" evidence="4">
    <location>
        <position position="1499"/>
    </location>
</feature>
<feature type="modified residue" description="O-(pantetheine 4'-phosphoryl)serine" evidence="3">
    <location>
        <position position="195"/>
    </location>
</feature>
<evidence type="ECO:0000250" key="1">
    <source>
        <dbReference type="UniProtKB" id="P19097"/>
    </source>
</evidence>
<evidence type="ECO:0000250" key="2">
    <source>
        <dbReference type="UniProtKB" id="Q8TGA2"/>
    </source>
</evidence>
<evidence type="ECO:0000255" key="3">
    <source>
        <dbReference type="PROSITE-ProRule" id="PRU00258"/>
    </source>
</evidence>
<evidence type="ECO:0000255" key="4">
    <source>
        <dbReference type="PROSITE-ProRule" id="PRU01348"/>
    </source>
</evidence>
<evidence type="ECO:0000255" key="5">
    <source>
        <dbReference type="PROSITE-ProRule" id="PRU10022"/>
    </source>
</evidence>
<evidence type="ECO:0000256" key="6">
    <source>
        <dbReference type="SAM" id="MobiDB-lite"/>
    </source>
</evidence>
<evidence type="ECO:0000269" key="7">
    <source>
    </source>
</evidence>
<evidence type="ECO:0000269" key="8">
    <source>
    </source>
</evidence>
<evidence type="ECO:0000269" key="9">
    <source>
    </source>
</evidence>
<evidence type="ECO:0000303" key="10">
    <source>
    </source>
</evidence>
<evidence type="ECO:0000305" key="11"/>
<evidence type="ECO:0000305" key="12">
    <source>
    </source>
</evidence>
<organism>
    <name type="scientific">Emericella nidulans (strain FGSC A4 / ATCC 38163 / CBS 112.46 / NRRL 194 / M139)</name>
    <name type="common">Aspergillus nidulans</name>
    <dbReference type="NCBI Taxonomy" id="227321"/>
    <lineage>
        <taxon>Eukaryota</taxon>
        <taxon>Fungi</taxon>
        <taxon>Dikarya</taxon>
        <taxon>Ascomycota</taxon>
        <taxon>Pezizomycotina</taxon>
        <taxon>Eurotiomycetes</taxon>
        <taxon>Eurotiomycetidae</taxon>
        <taxon>Eurotiales</taxon>
        <taxon>Aspergillaceae</taxon>
        <taxon>Aspergillus</taxon>
        <taxon>Aspergillus subgen. Nidulantes</taxon>
    </lineage>
</organism>
<dbReference type="EC" id="2.3.1.86" evidence="12"/>
<dbReference type="EC" id="1.1.1.100" evidence="2"/>
<dbReference type="EC" id="2.3.1.41" evidence="2"/>
<dbReference type="EMBL" id="BN001302">
    <property type="protein sequence ID" value="CBF73444.1"/>
    <property type="molecule type" value="Genomic_DNA"/>
</dbReference>
<dbReference type="EMBL" id="AACD01000135">
    <property type="protein sequence ID" value="EAA59534.1"/>
    <property type="molecule type" value="Genomic_DNA"/>
</dbReference>
<dbReference type="RefSeq" id="XP_681149.1">
    <property type="nucleotide sequence ID" value="XM_676057.1"/>
</dbReference>
<dbReference type="SMR" id="Q5AV00"/>
<dbReference type="STRING" id="227321.Q5AV00"/>
<dbReference type="EnsemblFungi" id="CBF73444">
    <property type="protein sequence ID" value="CBF73444"/>
    <property type="gene ID" value="ANIA_07880"/>
</dbReference>
<dbReference type="GeneID" id="2869007"/>
<dbReference type="KEGG" id="ani:ANIA_07880"/>
<dbReference type="eggNOG" id="ENOG502QQJX">
    <property type="taxonomic scope" value="Eukaryota"/>
</dbReference>
<dbReference type="HOGENOM" id="CLU_000114_0_0_1"/>
<dbReference type="InParanoid" id="Q5AV00"/>
<dbReference type="OMA" id="GRQDSCL"/>
<dbReference type="OrthoDB" id="4251012at2759"/>
<dbReference type="Proteomes" id="UP000000560">
    <property type="component" value="Chromosome II"/>
</dbReference>
<dbReference type="GO" id="GO:0005835">
    <property type="term" value="C:fatty acid synthase complex"/>
    <property type="evidence" value="ECO:0007669"/>
    <property type="project" value="InterPro"/>
</dbReference>
<dbReference type="GO" id="GO:0004316">
    <property type="term" value="F:3-oxoacyl-[acyl-carrier-protein] reductase (NADPH) activity"/>
    <property type="evidence" value="ECO:0007669"/>
    <property type="project" value="UniProtKB-EC"/>
</dbReference>
<dbReference type="GO" id="GO:0004315">
    <property type="term" value="F:3-oxoacyl-[acyl-carrier-protein] synthase activity"/>
    <property type="evidence" value="ECO:0007669"/>
    <property type="project" value="UniProtKB-EC"/>
</dbReference>
<dbReference type="GO" id="GO:0004312">
    <property type="term" value="F:fatty acid synthase activity"/>
    <property type="evidence" value="ECO:0007669"/>
    <property type="project" value="InterPro"/>
</dbReference>
<dbReference type="GO" id="GO:0004321">
    <property type="term" value="F:fatty-acyl-CoA synthase activity"/>
    <property type="evidence" value="ECO:0007669"/>
    <property type="project" value="UniProtKB-EC"/>
</dbReference>
<dbReference type="GO" id="GO:0008897">
    <property type="term" value="F:holo-[acyl-carrier-protein] synthase activity"/>
    <property type="evidence" value="ECO:0007669"/>
    <property type="project" value="InterPro"/>
</dbReference>
<dbReference type="GO" id="GO:0042759">
    <property type="term" value="P:long-chain fatty acid biosynthetic process"/>
    <property type="evidence" value="ECO:0007669"/>
    <property type="project" value="InterPro"/>
</dbReference>
<dbReference type="CDD" id="cd00828">
    <property type="entry name" value="elong_cond_enzymes"/>
    <property type="match status" value="1"/>
</dbReference>
<dbReference type="CDD" id="cd08950">
    <property type="entry name" value="KR_fFAS_SDR_c_like"/>
    <property type="match status" value="1"/>
</dbReference>
<dbReference type="FunFam" id="3.30.70.2490:FF:000001">
    <property type="entry name" value="Fatty acid synthase subunit alpha"/>
    <property type="match status" value="1"/>
</dbReference>
<dbReference type="FunFam" id="3.40.50.720:FF:000168">
    <property type="entry name" value="Fatty acid synthase subunit alpha"/>
    <property type="match status" value="1"/>
</dbReference>
<dbReference type="FunFam" id="3.40.50.720:FF:001423">
    <property type="entry name" value="Fatty acid synthase subunit alpha"/>
    <property type="match status" value="1"/>
</dbReference>
<dbReference type="FunFam" id="3.90.25.70:FF:000001">
    <property type="entry name" value="Fatty acid synthase subunit alpha"/>
    <property type="match status" value="1"/>
</dbReference>
<dbReference type="Gene3D" id="3.30.70.2490">
    <property type="match status" value="1"/>
</dbReference>
<dbReference type="Gene3D" id="3.40.47.10">
    <property type="match status" value="1"/>
</dbReference>
<dbReference type="Gene3D" id="3.90.25.70">
    <property type="match status" value="1"/>
</dbReference>
<dbReference type="Gene3D" id="6.10.140.1410">
    <property type="match status" value="1"/>
</dbReference>
<dbReference type="Gene3D" id="6.10.250.1930">
    <property type="match status" value="1"/>
</dbReference>
<dbReference type="Gene3D" id="3.40.50.720">
    <property type="entry name" value="NAD(P)-binding Rossmann-like Domain"/>
    <property type="match status" value="2"/>
</dbReference>
<dbReference type="InterPro" id="IPR016035">
    <property type="entry name" value="Acyl_Trfase/lysoPLipase"/>
</dbReference>
<dbReference type="InterPro" id="IPR040899">
    <property type="entry name" value="Fas_alpha_ACP"/>
</dbReference>
<dbReference type="InterPro" id="IPR047224">
    <property type="entry name" value="FAS_alpha_su_C"/>
</dbReference>
<dbReference type="InterPro" id="IPR026025">
    <property type="entry name" value="FAS_alpha_yeast"/>
</dbReference>
<dbReference type="InterPro" id="IPR041550">
    <property type="entry name" value="FASI_helical"/>
</dbReference>
<dbReference type="InterPro" id="IPR050830">
    <property type="entry name" value="Fungal_FAS"/>
</dbReference>
<dbReference type="InterPro" id="IPR018201">
    <property type="entry name" value="Ketoacyl_synth_AS"/>
</dbReference>
<dbReference type="InterPro" id="IPR014031">
    <property type="entry name" value="Ketoacyl_synth_C"/>
</dbReference>
<dbReference type="InterPro" id="IPR014030">
    <property type="entry name" value="Ketoacyl_synth_N"/>
</dbReference>
<dbReference type="InterPro" id="IPR036291">
    <property type="entry name" value="NAD(P)-bd_dom_sf"/>
</dbReference>
<dbReference type="InterPro" id="IPR020841">
    <property type="entry name" value="PKS_Beta-ketoAc_synthase_dom"/>
</dbReference>
<dbReference type="InterPro" id="IPR009081">
    <property type="entry name" value="PP-bd_ACP"/>
</dbReference>
<dbReference type="InterPro" id="IPR016039">
    <property type="entry name" value="Thiolase-like"/>
</dbReference>
<dbReference type="PANTHER" id="PTHR10982:SF21">
    <property type="entry name" value="FATTY ACID SYNTHASE SUBUNIT BETA"/>
    <property type="match status" value="1"/>
</dbReference>
<dbReference type="PANTHER" id="PTHR10982">
    <property type="entry name" value="MALONYL COA-ACYL CARRIER PROTEIN TRANSACYLASE"/>
    <property type="match status" value="1"/>
</dbReference>
<dbReference type="Pfam" id="PF18325">
    <property type="entry name" value="Fas_alpha_ACP"/>
    <property type="match status" value="1"/>
</dbReference>
<dbReference type="Pfam" id="PF18314">
    <property type="entry name" value="FAS_I_H"/>
    <property type="match status" value="1"/>
</dbReference>
<dbReference type="Pfam" id="PF00109">
    <property type="entry name" value="ketoacyl-synt"/>
    <property type="match status" value="1"/>
</dbReference>
<dbReference type="Pfam" id="PF02801">
    <property type="entry name" value="Ketoacyl-synt_C"/>
    <property type="match status" value="1"/>
</dbReference>
<dbReference type="PIRSF" id="PIRSF000454">
    <property type="entry name" value="FAS_yeast_alpha"/>
    <property type="match status" value="1"/>
</dbReference>
<dbReference type="SUPFAM" id="SSF52151">
    <property type="entry name" value="FabD/lysophospholipase-like"/>
    <property type="match status" value="1"/>
</dbReference>
<dbReference type="SUPFAM" id="SSF51735">
    <property type="entry name" value="NAD(P)-binding Rossmann-fold domains"/>
    <property type="match status" value="1"/>
</dbReference>
<dbReference type="SUPFAM" id="SSF53901">
    <property type="entry name" value="Thiolase-like"/>
    <property type="match status" value="2"/>
</dbReference>
<dbReference type="PROSITE" id="PS50075">
    <property type="entry name" value="CARRIER"/>
    <property type="match status" value="1"/>
</dbReference>
<dbReference type="PROSITE" id="PS00606">
    <property type="entry name" value="KS3_1"/>
    <property type="match status" value="1"/>
</dbReference>
<dbReference type="PROSITE" id="PS52004">
    <property type="entry name" value="KS3_2"/>
    <property type="match status" value="1"/>
</dbReference>
<sequence length="1659" mass="181995">MVAAQDDGAQRKLAHTLLLELMSYQFASPVRWIETQDVVLGQYRAERIIEIGPAATLTNMIKQTVQSKFLHSDRASLLQRQLLASEKQGKDIYYEDDGVGIGTGAEAPAPSAKTQAQASGGAGTIAGAGSSTAPVTAPPAPAAAKAVPAGGMQAIEDRQAQAFEIVRTLLSRILKIALTDVVGTQSIKSLSGGRSTLENEIIGDLASEFGSLPDRAEDLTVNDLSAALQKTFTGQMRKVILKMLHAMFASKMPGQFTVATARTYLHSRWGLGSGRQDSVLLLAIAQQPGSRLKEEAEARSFFDGLVQFYADEHGLTLGANSGAADETSGLGGGLVMDQKTLAALTGGQQELSKALLKIYAKHLDIDLDGDRRALHDLQATVEKDLRLALDQIHQELGEDFTDGVQPVFSARKARRFDSAWSWALQDLLQLYYEVSRTGGETEVDLAAKRCKHIEDAADPRLLDVLQRIVGRFEQQPVLSSMFTQLAQRCRDSLLHGPRYLARPDQQGPRTTISAEGDITYTEQERAEPVPLADLVYLPKSTEAAPLEPFLHLKQRTGGSSAWTYSHDLTEQYRAVLEQATTVGESFAGRSVLITGAGVGSIGAEVLKGLLAGGARVIVTTSRFSSSVVRKYQDLYTQVGSRGSELVVVPFNQASVQDVTALVNYIYDAQGGLHWDLDHILPFAAMPENGRTIEKIDPHSELAHRTMMVNTLRLLGAVKARKEAQGSRTRPTQVILPLSPNHGVFGGDGLYSESKLGLEALFNRWHSEDWSDYLSVCGAVIGWTRGTGLMSGNNLVAEGIEELGCRTFSQQEMAQCLLCLMFNTMCSLCEEAPLYADLSGRMGAVQNLRQKVQELRTEINETANTRRALLEELAMEARCSEGPTPTIDSEPAKATATPTLTAHVRLDFPPTVDYNQEIKPLTADLQGMVDLDRVVVVTGFGEIGPWGNARTRWEMEAYGEFSLEGCVEMAWLMGLIRYENSSSPGWVDAKTNERVHDHEVKHKYEEHILSHTGIRLIEPDRFGANYHPEHKQLLHEVLIQEDFPELEVPEATAQQMKLEHGNKVDIIPDPEGGDQCRVVLKKGAKLMVPKALRLDRMVIGQIPTGWDARKYGIPEDVISQVDPVTLYMLACSIEALLSSGITDPYEIYRYIHVSEAGNCVGSSLGGFNSLQQMYRGRYMEKEVQKDILQETFVNTIGAWMNMLLMSSAGPIRTPVGACATAIESVELGYDTLISGKAKFCFVGGGDDFGEEVLYEFANMKATANTVDEFEQGREASEMSRPAASTRNGFMESHGCGVQILTTARLAIEMGLPVRGVIAFVETSSDKASRSVPAPGRGILSKAREVRSSSPSSSLISSPLLNISNRRKRLDFRKKQIEFARETALEELQLEIAHVEESEVEDYIRERTAQINAEAQKDLRNAQYHLGNAFWQNDPSIAPLRGALAVWGLTIDDLDVASFHGTSTKLNEKNECSLIQAQLSHLGRAKGNVILGVFQKYLTGHPKGAAGAWMLNGALQILDTGIVPGNRNLDNVEAELQKNEQIAFLNRSLDTGRGSMRAVSVTSFGFGQKGAQTIVVHPKYLFATLEEQEYEEYLDKRAKRQKKADSFFYRGLASNRLFELKTAPPWAPQKELETLLDPTPPQTNVDDRVARSIVQQESAEP</sequence>
<protein>
    <recommendedName>
        <fullName evidence="10">Fatty acid synthase subunit alpha</fullName>
        <ecNumber evidence="12">2.3.1.86</ecNumber>
    </recommendedName>
    <alternativeName>
        <fullName evidence="10">Aspercryptin biosynthesis cluster protein F</fullName>
    </alternativeName>
    <domain>
        <recommendedName>
            <fullName evidence="2">3-oxoacyl-[acyl-carrier-protein] reductase</fullName>
            <ecNumber evidence="2">1.1.1.100</ecNumber>
        </recommendedName>
        <alternativeName>
            <fullName evidence="2">Beta-ketoacyl reductase</fullName>
        </alternativeName>
    </domain>
    <domain>
        <recommendedName>
            <fullName evidence="2">3-oxoacyl-[acyl-carrier-protein] synthase</fullName>
            <ecNumber evidence="2">2.3.1.41</ecNumber>
        </recommendedName>
    </domain>
</protein>
<gene>
    <name evidence="10" type="primary">atnF</name>
    <name type="ORF">ANIA_07880</name>
</gene>